<evidence type="ECO:0000255" key="1">
    <source>
        <dbReference type="HAMAP-Rule" id="MF_00511"/>
    </source>
</evidence>
<evidence type="ECO:0000305" key="2"/>
<organism>
    <name type="scientific">Methanoculleus marisnigri (strain ATCC 35101 / DSM 1498 / JR1)</name>
    <dbReference type="NCBI Taxonomy" id="368407"/>
    <lineage>
        <taxon>Archaea</taxon>
        <taxon>Methanobacteriati</taxon>
        <taxon>Methanobacteriota</taxon>
        <taxon>Stenosarchaea group</taxon>
        <taxon>Methanomicrobia</taxon>
        <taxon>Methanomicrobiales</taxon>
        <taxon>Methanomicrobiaceae</taxon>
        <taxon>Methanoculleus</taxon>
    </lineage>
</organism>
<reference key="1">
    <citation type="journal article" date="2009" name="Stand. Genomic Sci.">
        <title>Complete genome sequence of Methanoculleus marisnigri Romesser et al. 1981 type strain JR1.</title>
        <authorList>
            <person name="Anderson I.J."/>
            <person name="Sieprawska-Lupa M."/>
            <person name="Lapidus A."/>
            <person name="Nolan M."/>
            <person name="Copeland A."/>
            <person name="Glavina Del Rio T."/>
            <person name="Tice H."/>
            <person name="Dalin E."/>
            <person name="Barry K."/>
            <person name="Saunders E."/>
            <person name="Han C."/>
            <person name="Brettin T."/>
            <person name="Detter J.C."/>
            <person name="Bruce D."/>
            <person name="Mikhailova N."/>
            <person name="Pitluck S."/>
            <person name="Hauser L."/>
            <person name="Land M."/>
            <person name="Lucas S."/>
            <person name="Richardson P."/>
            <person name="Whitman W.B."/>
            <person name="Kyrpides N.C."/>
        </authorList>
    </citation>
    <scope>NUCLEOTIDE SEQUENCE [LARGE SCALE GENOMIC DNA]</scope>
    <source>
        <strain>ATCC 35101 / DSM 1498 / JR1</strain>
    </source>
</reference>
<dbReference type="EMBL" id="CP000562">
    <property type="protein sequence ID" value="ABN57388.1"/>
    <property type="molecule type" value="Genomic_DNA"/>
</dbReference>
<dbReference type="RefSeq" id="WP_011844299.1">
    <property type="nucleotide sequence ID" value="NC_009051.1"/>
</dbReference>
<dbReference type="SMR" id="A3CVI8"/>
<dbReference type="STRING" id="368407.Memar_1459"/>
<dbReference type="GeneID" id="4847594"/>
<dbReference type="KEGG" id="mem:Memar_1459"/>
<dbReference type="eggNOG" id="arCOG01885">
    <property type="taxonomic scope" value="Archaea"/>
</dbReference>
<dbReference type="HOGENOM" id="CLU_176720_1_0_2"/>
<dbReference type="OrthoDB" id="52479at2157"/>
<dbReference type="Proteomes" id="UP000002146">
    <property type="component" value="Chromosome"/>
</dbReference>
<dbReference type="GO" id="GO:1990904">
    <property type="term" value="C:ribonucleoprotein complex"/>
    <property type="evidence" value="ECO:0007669"/>
    <property type="project" value="UniProtKB-KW"/>
</dbReference>
<dbReference type="GO" id="GO:0005840">
    <property type="term" value="C:ribosome"/>
    <property type="evidence" value="ECO:0007669"/>
    <property type="project" value="UniProtKB-KW"/>
</dbReference>
<dbReference type="GO" id="GO:0003735">
    <property type="term" value="F:structural constituent of ribosome"/>
    <property type="evidence" value="ECO:0007669"/>
    <property type="project" value="InterPro"/>
</dbReference>
<dbReference type="GO" id="GO:0006412">
    <property type="term" value="P:translation"/>
    <property type="evidence" value="ECO:0007669"/>
    <property type="project" value="UniProtKB-UniRule"/>
</dbReference>
<dbReference type="Gene3D" id="1.10.60.20">
    <property type="entry name" value="Ribosomal protein S17e-like"/>
    <property type="match status" value="1"/>
</dbReference>
<dbReference type="HAMAP" id="MF_00511">
    <property type="entry name" value="Ribosomal_eS17"/>
    <property type="match status" value="1"/>
</dbReference>
<dbReference type="InterPro" id="IPR001210">
    <property type="entry name" value="Ribosomal_eS17"/>
</dbReference>
<dbReference type="InterPro" id="IPR036401">
    <property type="entry name" value="Ribosomal_eS17_sf"/>
</dbReference>
<dbReference type="NCBIfam" id="NF002242">
    <property type="entry name" value="PRK01151.1"/>
    <property type="match status" value="1"/>
</dbReference>
<dbReference type="Pfam" id="PF00833">
    <property type="entry name" value="Ribosomal_S17e"/>
    <property type="match status" value="1"/>
</dbReference>
<dbReference type="SUPFAM" id="SSF116820">
    <property type="entry name" value="Rps17e-like"/>
    <property type="match status" value="1"/>
</dbReference>
<protein>
    <recommendedName>
        <fullName evidence="1">Small ribosomal subunit protein eS17</fullName>
    </recommendedName>
    <alternativeName>
        <fullName evidence="2">30S ribosomal protein S17e</fullName>
    </alternativeName>
</protein>
<sequence>MGIKPSYIKNLGEELIVKHRDRFSGDFEENKHAVAEVAVIDSKTVRNRVAGYISRKINTRKR</sequence>
<keyword id="KW-0687">Ribonucleoprotein</keyword>
<keyword id="KW-0689">Ribosomal protein</keyword>
<comment type="similarity">
    <text evidence="1">Belongs to the eukaryotic ribosomal protein eS17 family.</text>
</comment>
<gene>
    <name evidence="1" type="primary">rps17e</name>
    <name type="ordered locus">Memar_1459</name>
</gene>
<feature type="chain" id="PRO_1000127259" description="Small ribosomal subunit protein eS17">
    <location>
        <begin position="1"/>
        <end position="62"/>
    </location>
</feature>
<name>RS17E_METMJ</name>
<proteinExistence type="inferred from homology"/>
<accession>A3CVI8</accession>